<feature type="chain" id="PRO_1000197158" description="Trp operon repressor">
    <location>
        <begin position="1"/>
        <end position="108"/>
    </location>
</feature>
<feature type="DNA-binding region" evidence="1">
    <location>
        <begin position="68"/>
        <end position="91"/>
    </location>
</feature>
<comment type="function">
    <text evidence="1">This protein is an aporepressor. When complexed with L-tryptophan it binds the operator region of the trp operon (5'-ACTAGT-'3') and prevents the initiation of transcription. The complex also regulates trp repressor biosynthesis by binding to its regulatory region.</text>
</comment>
<comment type="subunit">
    <text evidence="1">Homodimer.</text>
</comment>
<comment type="subcellular location">
    <subcellularLocation>
        <location evidence="1">Cytoplasm</location>
    </subcellularLocation>
</comment>
<comment type="similarity">
    <text evidence="1">Belongs to the TrpR family.</text>
</comment>
<name>TRPR_SALSV</name>
<accession>B4TU53</accession>
<evidence type="ECO:0000255" key="1">
    <source>
        <dbReference type="HAMAP-Rule" id="MF_00475"/>
    </source>
</evidence>
<gene>
    <name evidence="1" type="primary">trpR</name>
    <name type="ordered locus">SeSA_A4834</name>
</gene>
<sequence length="108" mass="12391">MTQHSPYSSAIAEQRNQEWLRFVELLRQAYAEDLHLPLLQLMLTPDEREALGTRVRIIEELLRGEMSQRELKTELGAGIATITRGSNSLKSAPVELRHWLENVLLKNA</sequence>
<dbReference type="EMBL" id="CP001127">
    <property type="protein sequence ID" value="ACF90144.1"/>
    <property type="molecule type" value="Genomic_DNA"/>
</dbReference>
<dbReference type="RefSeq" id="WP_000192003.1">
    <property type="nucleotide sequence ID" value="NC_011094.1"/>
</dbReference>
<dbReference type="SMR" id="B4TU53"/>
<dbReference type="KEGG" id="sew:SeSA_A4834"/>
<dbReference type="HOGENOM" id="CLU_147939_0_0_6"/>
<dbReference type="Proteomes" id="UP000001865">
    <property type="component" value="Chromosome"/>
</dbReference>
<dbReference type="GO" id="GO:0005737">
    <property type="term" value="C:cytoplasm"/>
    <property type="evidence" value="ECO:0007669"/>
    <property type="project" value="UniProtKB-SubCell"/>
</dbReference>
<dbReference type="GO" id="GO:0003700">
    <property type="term" value="F:DNA-binding transcription factor activity"/>
    <property type="evidence" value="ECO:0007669"/>
    <property type="project" value="InterPro"/>
</dbReference>
<dbReference type="GO" id="GO:0043565">
    <property type="term" value="F:sequence-specific DNA binding"/>
    <property type="evidence" value="ECO:0007669"/>
    <property type="project" value="InterPro"/>
</dbReference>
<dbReference type="GO" id="GO:0045892">
    <property type="term" value="P:negative regulation of DNA-templated transcription"/>
    <property type="evidence" value="ECO:0007669"/>
    <property type="project" value="UniProtKB-UniRule"/>
</dbReference>
<dbReference type="FunFam" id="1.10.1270.10:FF:000001">
    <property type="entry name" value="Trp operon repressor"/>
    <property type="match status" value="1"/>
</dbReference>
<dbReference type="Gene3D" id="1.10.1270.10">
    <property type="entry name" value="TrpR-like"/>
    <property type="match status" value="1"/>
</dbReference>
<dbReference type="HAMAP" id="MF_00475">
    <property type="entry name" value="Trp_repressor"/>
    <property type="match status" value="1"/>
</dbReference>
<dbReference type="InterPro" id="IPR000831">
    <property type="entry name" value="Trp_repress"/>
</dbReference>
<dbReference type="InterPro" id="IPR013335">
    <property type="entry name" value="Trp_repress_bac"/>
</dbReference>
<dbReference type="InterPro" id="IPR010921">
    <property type="entry name" value="Trp_repressor/repl_initiator"/>
</dbReference>
<dbReference type="InterPro" id="IPR038116">
    <property type="entry name" value="TrpR-like_sf"/>
</dbReference>
<dbReference type="NCBIfam" id="TIGR01321">
    <property type="entry name" value="TrpR"/>
    <property type="match status" value="1"/>
</dbReference>
<dbReference type="PANTHER" id="PTHR38025">
    <property type="entry name" value="TRP OPERON REPRESSOR"/>
    <property type="match status" value="1"/>
</dbReference>
<dbReference type="PANTHER" id="PTHR38025:SF1">
    <property type="entry name" value="TRP OPERON REPRESSOR"/>
    <property type="match status" value="1"/>
</dbReference>
<dbReference type="Pfam" id="PF01371">
    <property type="entry name" value="Trp_repressor"/>
    <property type="match status" value="1"/>
</dbReference>
<dbReference type="PIRSF" id="PIRSF003196">
    <property type="entry name" value="Trp_repressor"/>
    <property type="match status" value="1"/>
</dbReference>
<dbReference type="SUPFAM" id="SSF48295">
    <property type="entry name" value="TrpR-like"/>
    <property type="match status" value="1"/>
</dbReference>
<reference key="1">
    <citation type="journal article" date="2011" name="J. Bacteriol.">
        <title>Comparative genomics of 28 Salmonella enterica isolates: evidence for CRISPR-mediated adaptive sublineage evolution.</title>
        <authorList>
            <person name="Fricke W.F."/>
            <person name="Mammel M.K."/>
            <person name="McDermott P.F."/>
            <person name="Tartera C."/>
            <person name="White D.G."/>
            <person name="Leclerc J.E."/>
            <person name="Ravel J."/>
            <person name="Cebula T.A."/>
        </authorList>
    </citation>
    <scope>NUCLEOTIDE SEQUENCE [LARGE SCALE GENOMIC DNA]</scope>
    <source>
        <strain>CVM19633</strain>
    </source>
</reference>
<organism>
    <name type="scientific">Salmonella schwarzengrund (strain CVM19633)</name>
    <dbReference type="NCBI Taxonomy" id="439843"/>
    <lineage>
        <taxon>Bacteria</taxon>
        <taxon>Pseudomonadati</taxon>
        <taxon>Pseudomonadota</taxon>
        <taxon>Gammaproteobacteria</taxon>
        <taxon>Enterobacterales</taxon>
        <taxon>Enterobacteriaceae</taxon>
        <taxon>Salmonella</taxon>
    </lineage>
</organism>
<keyword id="KW-0963">Cytoplasm</keyword>
<keyword id="KW-0238">DNA-binding</keyword>
<keyword id="KW-0678">Repressor</keyword>
<keyword id="KW-0804">Transcription</keyword>
<keyword id="KW-0805">Transcription regulation</keyword>
<proteinExistence type="inferred from homology"/>
<protein>
    <recommendedName>
        <fullName evidence="1">Trp operon repressor</fullName>
    </recommendedName>
</protein>